<gene>
    <name type="ordered locus">Rv2559c</name>
    <name type="ORF">MTCY9C4.09</name>
</gene>
<accession>P9WQN1</accession>
<accession>L0T9Z6</accession>
<accession>Q50739</accession>
<organism>
    <name type="scientific">Mycobacterium tuberculosis (strain ATCC 25618 / H37Rv)</name>
    <dbReference type="NCBI Taxonomy" id="83332"/>
    <lineage>
        <taxon>Bacteria</taxon>
        <taxon>Bacillati</taxon>
        <taxon>Actinomycetota</taxon>
        <taxon>Actinomycetes</taxon>
        <taxon>Mycobacteriales</taxon>
        <taxon>Mycobacteriaceae</taxon>
        <taxon>Mycobacterium</taxon>
        <taxon>Mycobacterium tuberculosis complex</taxon>
    </lineage>
</organism>
<sequence>MPEAVSDGLFDVPGVPMTSGHDLGASAGAPLAVRMRPASLDEVVGQDHLLAPGSPLRRLVEGSGVASVILYGPPGSGKTTLAALISQATGRRFEALSALSAGVKEVRAVIENSRKALLHGEQTVLFIDEVHRFSKTQQDALLSAVEHRVVLLVAATTENPSFSVVAPLLSRSLILQLRPLTAEDTRAVVQRAIDDPRGLGRAVAVAPEAVDLLVQLAAGDARRALTALEVAAEAAQAAGELVSVQTIERSVDKAAVRYDRDGDQHYDVVSAFIKSVRGSDVDAALHYLARMLVAGEDPRFIARRLMILASEDIGMAGPSALQVAVAAAQTVALIGMPEAQLTLAHATIHLATAPKSNAVTTALAAAMNDIKAGKAGLVPAHLRDGHYSGAAALGNAQGYKYSHDDPDGVVAQQYPPDELVDVDYYRPTGRGGEREIAGRLDRLRAIIRKKRG</sequence>
<comment type="similarity">
    <text evidence="2">Belongs to the AAA ATPase family. RarA/MGS1/WRNIP1 subfamily.</text>
</comment>
<feature type="chain" id="PRO_0000104039" description="Uncharacterized AAA domain-containing protein Rv2559c">
    <location>
        <begin position="1"/>
        <end position="452"/>
    </location>
</feature>
<feature type="binding site" evidence="1">
    <location>
        <begin position="72"/>
        <end position="79"/>
    </location>
    <ligand>
        <name>ATP</name>
        <dbReference type="ChEBI" id="CHEBI:30616"/>
    </ligand>
</feature>
<name>Y2559_MYCTU</name>
<reference key="1">
    <citation type="journal article" date="1998" name="Nature">
        <title>Deciphering the biology of Mycobacterium tuberculosis from the complete genome sequence.</title>
        <authorList>
            <person name="Cole S.T."/>
            <person name="Brosch R."/>
            <person name="Parkhill J."/>
            <person name="Garnier T."/>
            <person name="Churcher C.M."/>
            <person name="Harris D.E."/>
            <person name="Gordon S.V."/>
            <person name="Eiglmeier K."/>
            <person name="Gas S."/>
            <person name="Barry C.E. III"/>
            <person name="Tekaia F."/>
            <person name="Badcock K."/>
            <person name="Basham D."/>
            <person name="Brown D."/>
            <person name="Chillingworth T."/>
            <person name="Connor R."/>
            <person name="Davies R.M."/>
            <person name="Devlin K."/>
            <person name="Feltwell T."/>
            <person name="Gentles S."/>
            <person name="Hamlin N."/>
            <person name="Holroyd S."/>
            <person name="Hornsby T."/>
            <person name="Jagels K."/>
            <person name="Krogh A."/>
            <person name="McLean J."/>
            <person name="Moule S."/>
            <person name="Murphy L.D."/>
            <person name="Oliver S."/>
            <person name="Osborne J."/>
            <person name="Quail M.A."/>
            <person name="Rajandream M.A."/>
            <person name="Rogers J."/>
            <person name="Rutter S."/>
            <person name="Seeger K."/>
            <person name="Skelton S."/>
            <person name="Squares S."/>
            <person name="Squares R."/>
            <person name="Sulston J.E."/>
            <person name="Taylor K."/>
            <person name="Whitehead S."/>
            <person name="Barrell B.G."/>
        </authorList>
    </citation>
    <scope>NUCLEOTIDE SEQUENCE [LARGE SCALE GENOMIC DNA]</scope>
    <source>
        <strain>ATCC 25618 / H37Rv</strain>
    </source>
</reference>
<reference key="2">
    <citation type="journal article" date="2011" name="Mol. Cell. Proteomics">
        <title>Proteogenomic analysis of Mycobacterium tuberculosis by high resolution mass spectrometry.</title>
        <authorList>
            <person name="Kelkar D.S."/>
            <person name="Kumar D."/>
            <person name="Kumar P."/>
            <person name="Balakrishnan L."/>
            <person name="Muthusamy B."/>
            <person name="Yadav A.K."/>
            <person name="Shrivastava P."/>
            <person name="Marimuthu A."/>
            <person name="Anand S."/>
            <person name="Sundaram H."/>
            <person name="Kingsbury R."/>
            <person name="Harsha H.C."/>
            <person name="Nair B."/>
            <person name="Prasad T.S."/>
            <person name="Chauhan D.S."/>
            <person name="Katoch K."/>
            <person name="Katoch V.M."/>
            <person name="Kumar P."/>
            <person name="Chaerkady R."/>
            <person name="Ramachandran S."/>
            <person name="Dash D."/>
            <person name="Pandey A."/>
        </authorList>
    </citation>
    <scope>IDENTIFICATION BY MASS SPECTROMETRY [LARGE SCALE ANALYSIS]</scope>
    <source>
        <strain>ATCC 25618 / H37Rv</strain>
    </source>
</reference>
<keyword id="KW-0067">ATP-binding</keyword>
<keyword id="KW-0547">Nucleotide-binding</keyword>
<keyword id="KW-1185">Reference proteome</keyword>
<protein>
    <recommendedName>
        <fullName>Uncharacterized AAA domain-containing protein Rv2559c</fullName>
    </recommendedName>
</protein>
<evidence type="ECO:0000255" key="1"/>
<evidence type="ECO:0000305" key="2"/>
<dbReference type="EMBL" id="AL123456">
    <property type="protein sequence ID" value="CCP45355.1"/>
    <property type="molecule type" value="Genomic_DNA"/>
</dbReference>
<dbReference type="PIR" id="C70728">
    <property type="entry name" value="C70728"/>
</dbReference>
<dbReference type="RefSeq" id="NP_217075.1">
    <property type="nucleotide sequence ID" value="NC_000962.3"/>
</dbReference>
<dbReference type="RefSeq" id="WP_003899376.1">
    <property type="nucleotide sequence ID" value="NZ_NVQJ01000032.1"/>
</dbReference>
<dbReference type="SMR" id="P9WQN1"/>
<dbReference type="FunCoup" id="P9WQN1">
    <property type="interactions" value="271"/>
</dbReference>
<dbReference type="STRING" id="83332.Rv2559c"/>
<dbReference type="PaxDb" id="83332-Rv2559c"/>
<dbReference type="DNASU" id="887368"/>
<dbReference type="GeneID" id="887368"/>
<dbReference type="KEGG" id="mtu:Rv2559c"/>
<dbReference type="KEGG" id="mtv:RVBD_2559c"/>
<dbReference type="TubercuList" id="Rv2559c"/>
<dbReference type="eggNOG" id="COG2256">
    <property type="taxonomic scope" value="Bacteria"/>
</dbReference>
<dbReference type="InParanoid" id="P9WQN1"/>
<dbReference type="OrthoDB" id="9778364at2"/>
<dbReference type="PhylomeDB" id="P9WQN1"/>
<dbReference type="Proteomes" id="UP000001584">
    <property type="component" value="Chromosome"/>
</dbReference>
<dbReference type="GO" id="GO:0005524">
    <property type="term" value="F:ATP binding"/>
    <property type="evidence" value="ECO:0007669"/>
    <property type="project" value="UniProtKB-KW"/>
</dbReference>
<dbReference type="GO" id="GO:0016887">
    <property type="term" value="F:ATP hydrolysis activity"/>
    <property type="evidence" value="ECO:0007669"/>
    <property type="project" value="InterPro"/>
</dbReference>
<dbReference type="GO" id="GO:0003677">
    <property type="term" value="F:DNA binding"/>
    <property type="evidence" value="ECO:0007669"/>
    <property type="project" value="InterPro"/>
</dbReference>
<dbReference type="GO" id="GO:0008047">
    <property type="term" value="F:enzyme activator activity"/>
    <property type="evidence" value="ECO:0000318"/>
    <property type="project" value="GO_Central"/>
</dbReference>
<dbReference type="GO" id="GO:0017116">
    <property type="term" value="F:single-stranded DNA helicase activity"/>
    <property type="evidence" value="ECO:0000318"/>
    <property type="project" value="GO_Central"/>
</dbReference>
<dbReference type="GO" id="GO:0000731">
    <property type="term" value="P:DNA synthesis involved in DNA repair"/>
    <property type="evidence" value="ECO:0000318"/>
    <property type="project" value="GO_Central"/>
</dbReference>
<dbReference type="GO" id="GO:0006261">
    <property type="term" value="P:DNA-templated DNA replication"/>
    <property type="evidence" value="ECO:0000318"/>
    <property type="project" value="GO_Central"/>
</dbReference>
<dbReference type="CDD" id="cd00009">
    <property type="entry name" value="AAA"/>
    <property type="match status" value="1"/>
</dbReference>
<dbReference type="CDD" id="cd18139">
    <property type="entry name" value="HLD_clamp_RarA"/>
    <property type="match status" value="1"/>
</dbReference>
<dbReference type="FunFam" id="3.40.50.300:FF:000345">
    <property type="entry name" value="AAA family ATPase"/>
    <property type="match status" value="1"/>
</dbReference>
<dbReference type="FunFam" id="1.10.3710.10:FF:000003">
    <property type="entry name" value="ATPase, AAA family protein"/>
    <property type="match status" value="1"/>
</dbReference>
<dbReference type="FunFam" id="1.20.272.10:FF:000001">
    <property type="entry name" value="Putative AAA family ATPase"/>
    <property type="match status" value="1"/>
</dbReference>
<dbReference type="Gene3D" id="1.10.8.60">
    <property type="match status" value="1"/>
</dbReference>
<dbReference type="Gene3D" id="1.20.272.10">
    <property type="match status" value="1"/>
</dbReference>
<dbReference type="Gene3D" id="1.10.3710.10">
    <property type="entry name" value="DNA polymerase III clamp loader subunits, C-terminal domain"/>
    <property type="match status" value="1"/>
</dbReference>
<dbReference type="Gene3D" id="3.40.50.300">
    <property type="entry name" value="P-loop containing nucleotide triphosphate hydrolases"/>
    <property type="match status" value="1"/>
</dbReference>
<dbReference type="InterPro" id="IPR003593">
    <property type="entry name" value="AAA+_ATPase"/>
</dbReference>
<dbReference type="InterPro" id="IPR032423">
    <property type="entry name" value="AAA_assoc_2"/>
</dbReference>
<dbReference type="InterPro" id="IPR051314">
    <property type="entry name" value="AAA_ATPase_RarA/MGS1/WRNIP1"/>
</dbReference>
<dbReference type="InterPro" id="IPR003959">
    <property type="entry name" value="ATPase_AAA_core"/>
</dbReference>
<dbReference type="InterPro" id="IPR008921">
    <property type="entry name" value="DNA_pol3_clamp-load_cplx_C"/>
</dbReference>
<dbReference type="InterPro" id="IPR021886">
    <property type="entry name" value="MgsA_C"/>
</dbReference>
<dbReference type="InterPro" id="IPR027417">
    <property type="entry name" value="P-loop_NTPase"/>
</dbReference>
<dbReference type="PANTHER" id="PTHR13779:SF7">
    <property type="entry name" value="ATPASE WRNIP1"/>
    <property type="match status" value="1"/>
</dbReference>
<dbReference type="PANTHER" id="PTHR13779">
    <property type="entry name" value="WERNER HELICASE-INTERACTING PROTEIN 1 FAMILY MEMBER"/>
    <property type="match status" value="1"/>
</dbReference>
<dbReference type="Pfam" id="PF00004">
    <property type="entry name" value="AAA"/>
    <property type="match status" value="1"/>
</dbReference>
<dbReference type="Pfam" id="PF16193">
    <property type="entry name" value="AAA_assoc_2"/>
    <property type="match status" value="1"/>
</dbReference>
<dbReference type="Pfam" id="PF12002">
    <property type="entry name" value="MgsA_C"/>
    <property type="match status" value="1"/>
</dbReference>
<dbReference type="SMART" id="SM00382">
    <property type="entry name" value="AAA"/>
    <property type="match status" value="1"/>
</dbReference>
<dbReference type="SUPFAM" id="SSF52540">
    <property type="entry name" value="P-loop containing nucleoside triphosphate hydrolases"/>
    <property type="match status" value="1"/>
</dbReference>
<dbReference type="SUPFAM" id="SSF48019">
    <property type="entry name" value="post-AAA+ oligomerization domain-like"/>
    <property type="match status" value="1"/>
</dbReference>
<proteinExistence type="evidence at protein level"/>